<protein>
    <recommendedName>
        <fullName>SPbeta prophage-derived protein BhlB</fullName>
    </recommendedName>
</protein>
<name>BHLB_BACSU</name>
<reference key="1">
    <citation type="journal article" date="1998" name="Microbiology">
        <title>The N-acetylmuramoyl-L-alanine amidase encoded by the Bacillus subtilis 168 prophage SP beta.</title>
        <authorList>
            <person name="Regamey A."/>
            <person name="Karamata D."/>
        </authorList>
    </citation>
    <scope>NUCLEOTIDE SEQUENCE [GENOMIC DNA]</scope>
    <scope>PUTATIVE FUNCTION</scope>
    <source>
        <strain>168</strain>
    </source>
</reference>
<reference key="2">
    <citation type="journal article" date="1997" name="Nature">
        <title>The complete genome sequence of the Gram-positive bacterium Bacillus subtilis.</title>
        <authorList>
            <person name="Kunst F."/>
            <person name="Ogasawara N."/>
            <person name="Moszer I."/>
            <person name="Albertini A.M."/>
            <person name="Alloni G."/>
            <person name="Azevedo V."/>
            <person name="Bertero M.G."/>
            <person name="Bessieres P."/>
            <person name="Bolotin A."/>
            <person name="Borchert S."/>
            <person name="Borriss R."/>
            <person name="Boursier L."/>
            <person name="Brans A."/>
            <person name="Braun M."/>
            <person name="Brignell S.C."/>
            <person name="Bron S."/>
            <person name="Brouillet S."/>
            <person name="Bruschi C.V."/>
            <person name="Caldwell B."/>
            <person name="Capuano V."/>
            <person name="Carter N.M."/>
            <person name="Choi S.-K."/>
            <person name="Codani J.-J."/>
            <person name="Connerton I.F."/>
            <person name="Cummings N.J."/>
            <person name="Daniel R.A."/>
            <person name="Denizot F."/>
            <person name="Devine K.M."/>
            <person name="Duesterhoeft A."/>
            <person name="Ehrlich S.D."/>
            <person name="Emmerson P.T."/>
            <person name="Entian K.-D."/>
            <person name="Errington J."/>
            <person name="Fabret C."/>
            <person name="Ferrari E."/>
            <person name="Foulger D."/>
            <person name="Fritz C."/>
            <person name="Fujita M."/>
            <person name="Fujita Y."/>
            <person name="Fuma S."/>
            <person name="Galizzi A."/>
            <person name="Galleron N."/>
            <person name="Ghim S.-Y."/>
            <person name="Glaser P."/>
            <person name="Goffeau A."/>
            <person name="Golightly E.J."/>
            <person name="Grandi G."/>
            <person name="Guiseppi G."/>
            <person name="Guy B.J."/>
            <person name="Haga K."/>
            <person name="Haiech J."/>
            <person name="Harwood C.R."/>
            <person name="Henaut A."/>
            <person name="Hilbert H."/>
            <person name="Holsappel S."/>
            <person name="Hosono S."/>
            <person name="Hullo M.-F."/>
            <person name="Itaya M."/>
            <person name="Jones L.-M."/>
            <person name="Joris B."/>
            <person name="Karamata D."/>
            <person name="Kasahara Y."/>
            <person name="Klaerr-Blanchard M."/>
            <person name="Klein C."/>
            <person name="Kobayashi Y."/>
            <person name="Koetter P."/>
            <person name="Koningstein G."/>
            <person name="Krogh S."/>
            <person name="Kumano M."/>
            <person name="Kurita K."/>
            <person name="Lapidus A."/>
            <person name="Lardinois S."/>
            <person name="Lauber J."/>
            <person name="Lazarevic V."/>
            <person name="Lee S.-M."/>
            <person name="Levine A."/>
            <person name="Liu H."/>
            <person name="Masuda S."/>
            <person name="Mauel C."/>
            <person name="Medigue C."/>
            <person name="Medina N."/>
            <person name="Mellado R.P."/>
            <person name="Mizuno M."/>
            <person name="Moestl D."/>
            <person name="Nakai S."/>
            <person name="Noback M."/>
            <person name="Noone D."/>
            <person name="O'Reilly M."/>
            <person name="Ogawa K."/>
            <person name="Ogiwara A."/>
            <person name="Oudega B."/>
            <person name="Park S.-H."/>
            <person name="Parro V."/>
            <person name="Pohl T.M."/>
            <person name="Portetelle D."/>
            <person name="Porwollik S."/>
            <person name="Prescott A.M."/>
            <person name="Presecan E."/>
            <person name="Pujic P."/>
            <person name="Purnelle B."/>
            <person name="Rapoport G."/>
            <person name="Rey M."/>
            <person name="Reynolds S."/>
            <person name="Rieger M."/>
            <person name="Rivolta C."/>
            <person name="Rocha E."/>
            <person name="Roche B."/>
            <person name="Rose M."/>
            <person name="Sadaie Y."/>
            <person name="Sato T."/>
            <person name="Scanlan E."/>
            <person name="Schleich S."/>
            <person name="Schroeter R."/>
            <person name="Scoffone F."/>
            <person name="Sekiguchi J."/>
            <person name="Sekowska A."/>
            <person name="Seror S.J."/>
            <person name="Serror P."/>
            <person name="Shin B.-S."/>
            <person name="Soldo B."/>
            <person name="Sorokin A."/>
            <person name="Tacconi E."/>
            <person name="Takagi T."/>
            <person name="Takahashi H."/>
            <person name="Takemaru K."/>
            <person name="Takeuchi M."/>
            <person name="Tamakoshi A."/>
            <person name="Tanaka T."/>
            <person name="Terpstra P."/>
            <person name="Tognoni A."/>
            <person name="Tosato V."/>
            <person name="Uchiyama S."/>
            <person name="Vandenbol M."/>
            <person name="Vannier F."/>
            <person name="Vassarotti A."/>
            <person name="Viari A."/>
            <person name="Wambutt R."/>
            <person name="Wedler E."/>
            <person name="Wedler H."/>
            <person name="Weitzenegger T."/>
            <person name="Winters P."/>
            <person name="Wipat A."/>
            <person name="Yamamoto H."/>
            <person name="Yamane K."/>
            <person name="Yasumoto K."/>
            <person name="Yata K."/>
            <person name="Yoshida K."/>
            <person name="Yoshikawa H.-F."/>
            <person name="Zumstein E."/>
            <person name="Yoshikawa H."/>
            <person name="Danchin A."/>
        </authorList>
    </citation>
    <scope>NUCLEOTIDE SEQUENCE [LARGE SCALE GENOMIC DNA]</scope>
    <source>
        <strain>168</strain>
    </source>
</reference>
<organism>
    <name type="scientific">Bacillus subtilis (strain 168)</name>
    <dbReference type="NCBI Taxonomy" id="224308"/>
    <lineage>
        <taxon>Bacteria</taxon>
        <taxon>Bacillati</taxon>
        <taxon>Bacillota</taxon>
        <taxon>Bacilli</taxon>
        <taxon>Bacillales</taxon>
        <taxon>Bacillaceae</taxon>
        <taxon>Bacillus</taxon>
    </lineage>
</organism>
<evidence type="ECO:0000255" key="1"/>
<evidence type="ECO:0000305" key="2"/>
<feature type="chain" id="PRO_0000164429" description="SPbeta prophage-derived protein BhlB">
    <location>
        <begin position="1"/>
        <end position="88"/>
    </location>
</feature>
<feature type="transmembrane region" description="Helical" evidence="1">
    <location>
        <begin position="15"/>
        <end position="35"/>
    </location>
</feature>
<feature type="transmembrane region" description="Helical" evidence="1">
    <location>
        <begin position="45"/>
        <end position="65"/>
    </location>
</feature>
<sequence>MFENIDKGTIVRTLLLAIALLNQIMVMLGKAAFIINEEDINHLYDCLYTIFTIVFTTSTTTAAWFKNNYITAKGKKQKQVLKKENLFK</sequence>
<accession>O31984</accession>
<keyword id="KW-1003">Cell membrane</keyword>
<keyword id="KW-0472">Membrane</keyword>
<keyword id="KW-1185">Reference proteome</keyword>
<keyword id="KW-0812">Transmembrane</keyword>
<keyword id="KW-1133">Transmembrane helix</keyword>
<dbReference type="EMBL" id="AF021803">
    <property type="protein sequence ID" value="AAC38302.1"/>
    <property type="molecule type" value="Genomic_DNA"/>
</dbReference>
<dbReference type="EMBL" id="AL009126">
    <property type="protein sequence ID" value="CAB14061.1"/>
    <property type="molecule type" value="Genomic_DNA"/>
</dbReference>
<dbReference type="RefSeq" id="NP_390026.1">
    <property type="nucleotide sequence ID" value="NC_000964.3"/>
</dbReference>
<dbReference type="RefSeq" id="WP_004399099.1">
    <property type="nucleotide sequence ID" value="NZ_OZ025638.1"/>
</dbReference>
<dbReference type="FunCoup" id="O31984">
    <property type="interactions" value="21"/>
</dbReference>
<dbReference type="STRING" id="224308.BSU21430"/>
<dbReference type="PaxDb" id="224308-BSU21430"/>
<dbReference type="EnsemblBacteria" id="CAB14061">
    <property type="protein sequence ID" value="CAB14061"/>
    <property type="gene ID" value="BSU_21430"/>
</dbReference>
<dbReference type="GeneID" id="939127"/>
<dbReference type="KEGG" id="bsu:BSU21430"/>
<dbReference type="PATRIC" id="fig|224308.179.peg.2340"/>
<dbReference type="eggNOG" id="ENOG50308R2">
    <property type="taxonomic scope" value="Bacteria"/>
</dbReference>
<dbReference type="InParanoid" id="O31984"/>
<dbReference type="OrthoDB" id="2405362at2"/>
<dbReference type="BioCyc" id="BSUB:BSU21430-MONOMER"/>
<dbReference type="Proteomes" id="UP000001570">
    <property type="component" value="Chromosome"/>
</dbReference>
<dbReference type="GO" id="GO:0005886">
    <property type="term" value="C:plasma membrane"/>
    <property type="evidence" value="ECO:0007669"/>
    <property type="project" value="UniProtKB-SubCell"/>
</dbReference>
<dbReference type="InterPro" id="IPR006479">
    <property type="entry name" value="Holin"/>
</dbReference>
<dbReference type="NCBIfam" id="TIGR01592">
    <property type="entry name" value="holin_SPP1"/>
    <property type="match status" value="1"/>
</dbReference>
<dbReference type="Pfam" id="PF04688">
    <property type="entry name" value="Holin_SPP1"/>
    <property type="match status" value="1"/>
</dbReference>
<gene>
    <name type="primary">bhlB</name>
    <name type="synonym">yomA</name>
    <name type="ordered locus">BSU21430</name>
</gene>
<comment type="function">
    <text>May be involved in the secretion of the autolysin BlyA.</text>
</comment>
<comment type="subcellular location">
    <subcellularLocation>
        <location evidence="2">Cell membrane</location>
        <topology evidence="2">Multi-pass membrane protein</topology>
    </subcellularLocation>
</comment>
<comment type="similarity">
    <text evidence="2">Belongs to the SPP1 holin family.</text>
</comment>
<proteinExistence type="inferred from homology"/>